<name>LLOS_MENAQ</name>
<evidence type="ECO:0000250" key="1">
    <source>
        <dbReference type="UniProtKB" id="Q40577"/>
    </source>
</evidence>
<evidence type="ECO:0000255" key="2"/>
<evidence type="ECO:0000269" key="3">
    <source>
    </source>
</evidence>
<evidence type="ECO:0000305" key="4"/>
<evidence type="ECO:0000305" key="5">
    <source>
    </source>
</evidence>
<organism>
    <name type="scientific">Mentha aquatica</name>
    <name type="common">Water mint</name>
    <dbReference type="NCBI Taxonomy" id="190902"/>
    <lineage>
        <taxon>Eukaryota</taxon>
        <taxon>Viridiplantae</taxon>
        <taxon>Streptophyta</taxon>
        <taxon>Embryophyta</taxon>
        <taxon>Tracheophyta</taxon>
        <taxon>Spermatophyta</taxon>
        <taxon>Magnoliopsida</taxon>
        <taxon>eudicotyledons</taxon>
        <taxon>Gunneridae</taxon>
        <taxon>Pentapetalae</taxon>
        <taxon>asterids</taxon>
        <taxon>lamiids</taxon>
        <taxon>Lamiales</taxon>
        <taxon>Lamiaceae</taxon>
        <taxon>Nepetoideae</taxon>
        <taxon>Mentheae</taxon>
        <taxon>Menthinae</taxon>
        <taxon>Mentha</taxon>
    </lineage>
</organism>
<comment type="function">
    <text evidence="3">Monoterpene synthase that catalyzes the formation of (3R)-linalool from geranyl diphosphate, but not from farnesyl diphosphate or geranylgeranyl diphosphate.</text>
</comment>
<comment type="catalytic activity">
    <reaction evidence="3">
        <text>(2E)-geranyl diphosphate + H2O = (R)-linalool + diphosphate</text>
        <dbReference type="Rhea" id="RHEA:15809"/>
        <dbReference type="ChEBI" id="CHEBI:28"/>
        <dbReference type="ChEBI" id="CHEBI:15377"/>
        <dbReference type="ChEBI" id="CHEBI:33019"/>
        <dbReference type="ChEBI" id="CHEBI:58057"/>
        <dbReference type="EC" id="4.2.3.26"/>
    </reaction>
</comment>
<comment type="cofactor">
    <cofactor evidence="5">
        <name>Mg(2+)</name>
        <dbReference type="ChEBI" id="CHEBI:18420"/>
    </cofactor>
    <cofactor evidence="5">
        <name>Mn(2+)</name>
        <dbReference type="ChEBI" id="CHEBI:29035"/>
    </cofactor>
    <text evidence="5">Binds 3 Mg(2+) or Mn(2+) ions per subunit.</text>
</comment>
<comment type="biophysicochemical properties">
    <kinetics>
        <KM evidence="3">25 uM for Geranyl diphosphate</KM>
    </kinetics>
    <phDependence>
        <text evidence="3">Optimum pH is 6.5.</text>
    </phDependence>
</comment>
<comment type="pathway">
    <text>Secondary metabolite biosynthesis; terpenoid biosynthesis.</text>
</comment>
<comment type="subcellular location">
    <subcellularLocation>
        <location evidence="2">Plastid</location>
        <location evidence="2">Chloroplast</location>
    </subcellularLocation>
</comment>
<comment type="domain">
    <text evidence="1">The Asp-Asp-Xaa-Xaa-Asp/Glu (DDXXD/E) motif is important for the catalytic activity, presumably through binding to Mg(2+).</text>
</comment>
<comment type="similarity">
    <text evidence="4">Belongs to the terpene synthase family. Tpsb subfamily.</text>
</comment>
<sequence length="606" mass="70535">MCTIISVNHHHVAILSKPKVKLFHTKNKRSASINLPWSLSPSSSAASRPISCSISSKLYTISSAQEETRRSGNYHPSVWDFDFIQSLDTDHYKEEKQLEREEELIMEVKKLLGAKMEATKQLELIDDLQNLGLSYFFRDEIKNILNSIYKIFQNNNSTKVGDLHFTSLGFRLLRQHGFNVSQGVFDCFKNEHGSDFEKTLIGEDTKGVLQLYEASFLLREGEDTLEVARKFSTEFLEEKLKAGIDGDNLSSSIGHSLEIPLHWRIQRLEERWFLDAYSRRKDMNPIIFELAKLDFNIIQATQQEELKDLSRWWNDSSLPQKLPFVRDRLVESYYWALGLFEAHKFGYERKTAAKIITLITALDDVYDIYGTLDELQLFTHVIRRWDTESATQLPYYLQLFYFVLYNFVSEVAYHILKEEGFISIPFLHRAWVDLVEGYLQEAKWYYTKYTPTMEEYLNYASITIGAPAVISQIYFMLAKSKEKPVIESFYEYDEIIRLSGMLVRLPDDLGTLPFEMKRGDVAKSIQIYMKEQNATREEAEEHVRFMIREAWKEMNTTMAANSDLRGDVVMAAANLGRDAQFMYLDGDGNHSQLQHRIANLLFKPYV</sequence>
<protein>
    <recommendedName>
        <fullName>R-linalool synthase, chloroplastic</fullName>
        <ecNumber evidence="3">4.2.3.26</ecNumber>
    </recommendedName>
</protein>
<accession>Q8H2B4</accession>
<reference key="1">
    <citation type="journal article" date="2002" name="Arch. Biochem. Biophys.">
        <title>Molecular cloning and characterization of a new linalool synthase.</title>
        <authorList>
            <person name="Crowell A.L."/>
            <person name="Williams D.C."/>
            <person name="Davis E.M."/>
            <person name="Wildung M.R."/>
            <person name="Croteau R."/>
        </authorList>
    </citation>
    <scope>NUCLEOTIDE SEQUENCE [MRNA]</scope>
    <scope>FUNCTION</scope>
    <scope>CATALYTIC ACTIVITY</scope>
    <scope>BIOPHYSICOCHEMICAL PROPERTIES</scope>
    <scope>COFACTOR</scope>
</reference>
<proteinExistence type="evidence at protein level"/>
<dbReference type="EC" id="4.2.3.26" evidence="3"/>
<dbReference type="EMBL" id="AY083653">
    <property type="protein sequence ID" value="AAL99381.1"/>
    <property type="molecule type" value="mRNA"/>
</dbReference>
<dbReference type="SMR" id="Q8H2B4"/>
<dbReference type="KEGG" id="ag:AAL99381"/>
<dbReference type="BioCyc" id="MetaCyc:MONOMER-12781"/>
<dbReference type="BRENDA" id="4.2.3.26">
    <property type="organism ID" value="8510"/>
</dbReference>
<dbReference type="UniPathway" id="UPA00213"/>
<dbReference type="GO" id="GO:0009507">
    <property type="term" value="C:chloroplast"/>
    <property type="evidence" value="ECO:0007669"/>
    <property type="project" value="UniProtKB-SubCell"/>
</dbReference>
<dbReference type="GO" id="GO:0000287">
    <property type="term" value="F:magnesium ion binding"/>
    <property type="evidence" value="ECO:0000314"/>
    <property type="project" value="UniProtKB"/>
</dbReference>
<dbReference type="GO" id="GO:0030145">
    <property type="term" value="F:manganese ion binding"/>
    <property type="evidence" value="ECO:0000314"/>
    <property type="project" value="UniProtKB"/>
</dbReference>
<dbReference type="GO" id="GO:0034008">
    <property type="term" value="F:R-linalool synthase activity"/>
    <property type="evidence" value="ECO:0000314"/>
    <property type="project" value="UniProtKB"/>
</dbReference>
<dbReference type="GO" id="GO:0010333">
    <property type="term" value="F:terpene synthase activity"/>
    <property type="evidence" value="ECO:0007669"/>
    <property type="project" value="InterPro"/>
</dbReference>
<dbReference type="GO" id="GO:0016102">
    <property type="term" value="P:diterpenoid biosynthetic process"/>
    <property type="evidence" value="ECO:0007669"/>
    <property type="project" value="InterPro"/>
</dbReference>
<dbReference type="GO" id="GO:0033383">
    <property type="term" value="P:geranyl diphosphate metabolic process"/>
    <property type="evidence" value="ECO:0000314"/>
    <property type="project" value="UniProtKB"/>
</dbReference>
<dbReference type="CDD" id="cd00684">
    <property type="entry name" value="Terpene_cyclase_plant_C1"/>
    <property type="match status" value="1"/>
</dbReference>
<dbReference type="FunFam" id="1.10.600.10:FF:000007">
    <property type="entry name" value="Isoprene synthase, chloroplastic"/>
    <property type="match status" value="1"/>
</dbReference>
<dbReference type="FunFam" id="1.50.10.130:FF:000001">
    <property type="entry name" value="Isoprene synthase, chloroplastic"/>
    <property type="match status" value="1"/>
</dbReference>
<dbReference type="Gene3D" id="1.10.600.10">
    <property type="entry name" value="Farnesyl Diphosphate Synthase"/>
    <property type="match status" value="1"/>
</dbReference>
<dbReference type="Gene3D" id="1.50.10.130">
    <property type="entry name" value="Terpene synthase, N-terminal domain"/>
    <property type="match status" value="1"/>
</dbReference>
<dbReference type="InterPro" id="IPR008949">
    <property type="entry name" value="Isoprenoid_synthase_dom_sf"/>
</dbReference>
<dbReference type="InterPro" id="IPR034741">
    <property type="entry name" value="Terpene_cyclase-like_1_C"/>
</dbReference>
<dbReference type="InterPro" id="IPR044814">
    <property type="entry name" value="Terpene_cyclase_plant_C1"/>
</dbReference>
<dbReference type="InterPro" id="IPR001906">
    <property type="entry name" value="Terpene_synth_N"/>
</dbReference>
<dbReference type="InterPro" id="IPR036965">
    <property type="entry name" value="Terpene_synth_N_sf"/>
</dbReference>
<dbReference type="InterPro" id="IPR050148">
    <property type="entry name" value="Terpene_synthase-like"/>
</dbReference>
<dbReference type="InterPro" id="IPR005630">
    <property type="entry name" value="Terpene_synthase_metal-bd"/>
</dbReference>
<dbReference type="InterPro" id="IPR008930">
    <property type="entry name" value="Terpenoid_cyclase/PrenylTrfase"/>
</dbReference>
<dbReference type="PANTHER" id="PTHR31225">
    <property type="entry name" value="OS04G0344100 PROTEIN-RELATED"/>
    <property type="match status" value="1"/>
</dbReference>
<dbReference type="PANTHER" id="PTHR31225:SF9">
    <property type="entry name" value="TERPENE SYNTHASE 10"/>
    <property type="match status" value="1"/>
</dbReference>
<dbReference type="Pfam" id="PF01397">
    <property type="entry name" value="Terpene_synth"/>
    <property type="match status" value="1"/>
</dbReference>
<dbReference type="Pfam" id="PF03936">
    <property type="entry name" value="Terpene_synth_C"/>
    <property type="match status" value="1"/>
</dbReference>
<dbReference type="SFLD" id="SFLDS00005">
    <property type="entry name" value="Isoprenoid_Synthase_Type_I"/>
    <property type="match status" value="1"/>
</dbReference>
<dbReference type="SFLD" id="SFLDG01019">
    <property type="entry name" value="Terpene_Cyclase_Like_1_C_Termi"/>
    <property type="match status" value="1"/>
</dbReference>
<dbReference type="SFLD" id="SFLDG01014">
    <property type="entry name" value="Terpene_Cyclase_Like_1_N-term"/>
    <property type="match status" value="1"/>
</dbReference>
<dbReference type="SUPFAM" id="SSF48239">
    <property type="entry name" value="Terpenoid cyclases/Protein prenyltransferases"/>
    <property type="match status" value="1"/>
</dbReference>
<dbReference type="SUPFAM" id="SSF48576">
    <property type="entry name" value="Terpenoid synthases"/>
    <property type="match status" value="1"/>
</dbReference>
<keyword id="KW-0150">Chloroplast</keyword>
<keyword id="KW-0456">Lyase</keyword>
<keyword id="KW-0460">Magnesium</keyword>
<keyword id="KW-0464">Manganese</keyword>
<keyword id="KW-0479">Metal-binding</keyword>
<keyword id="KW-0934">Plastid</keyword>
<keyword id="KW-0809">Transit peptide</keyword>
<feature type="transit peptide" description="Chloroplast" evidence="2">
    <location>
        <begin position="1"/>
        <end position="51"/>
    </location>
</feature>
<feature type="chain" id="PRO_0000398173" description="R-linalool synthase, chloroplastic">
    <location>
        <begin position="52"/>
        <end position="606"/>
    </location>
</feature>
<feature type="short sequence motif" description="DDXXD motif" evidence="1">
    <location>
        <begin position="363"/>
        <end position="367"/>
    </location>
</feature>
<feature type="binding site" evidence="1">
    <location>
        <position position="326"/>
    </location>
    <ligand>
        <name>(2E)-geranyl diphosphate</name>
        <dbReference type="ChEBI" id="CHEBI:58057"/>
    </ligand>
</feature>
<feature type="binding site" evidence="1">
    <location>
        <position position="363"/>
    </location>
    <ligand>
        <name>(2E)-geranyl diphosphate</name>
        <dbReference type="ChEBI" id="CHEBI:58057"/>
    </ligand>
</feature>
<feature type="binding site" evidence="1">
    <location>
        <position position="363"/>
    </location>
    <ligand>
        <name>Mg(2+)</name>
        <dbReference type="ChEBI" id="CHEBI:18420"/>
        <label>1</label>
    </ligand>
</feature>
<feature type="binding site" evidence="1">
    <location>
        <position position="363"/>
    </location>
    <ligand>
        <name>Mg(2+)</name>
        <dbReference type="ChEBI" id="CHEBI:18420"/>
        <label>2</label>
    </ligand>
</feature>
<feature type="binding site" evidence="1">
    <location>
        <position position="367"/>
    </location>
    <ligand>
        <name>(2E)-geranyl diphosphate</name>
        <dbReference type="ChEBI" id="CHEBI:58057"/>
    </ligand>
</feature>
<feature type="binding site" evidence="1">
    <location>
        <position position="367"/>
    </location>
    <ligand>
        <name>Mg(2+)</name>
        <dbReference type="ChEBI" id="CHEBI:18420"/>
        <label>1</label>
    </ligand>
</feature>
<feature type="binding site" evidence="1">
    <location>
        <position position="367"/>
    </location>
    <ligand>
        <name>Mg(2+)</name>
        <dbReference type="ChEBI" id="CHEBI:18420"/>
        <label>2</label>
    </ligand>
</feature>
<feature type="binding site" evidence="1">
    <location>
        <position position="504"/>
    </location>
    <ligand>
        <name>(2E)-geranyl diphosphate</name>
        <dbReference type="ChEBI" id="CHEBI:58057"/>
    </ligand>
</feature>
<feature type="binding site" evidence="1">
    <location>
        <position position="507"/>
    </location>
    <ligand>
        <name>(2E)-geranyl diphosphate</name>
        <dbReference type="ChEBI" id="CHEBI:58057"/>
    </ligand>
</feature>
<feature type="binding site" evidence="1">
    <location>
        <position position="507"/>
    </location>
    <ligand>
        <name>Mg(2+)</name>
        <dbReference type="ChEBI" id="CHEBI:18420"/>
        <label>3</label>
    </ligand>
</feature>
<feature type="binding site" evidence="1">
    <location>
        <position position="511"/>
    </location>
    <ligand>
        <name>Mg(2+)</name>
        <dbReference type="ChEBI" id="CHEBI:18420"/>
        <label>3</label>
    </ligand>
</feature>
<feature type="binding site" evidence="1">
    <location>
        <position position="515"/>
    </location>
    <ligand>
        <name>Mg(2+)</name>
        <dbReference type="ChEBI" id="CHEBI:18420"/>
        <label>3</label>
    </ligand>
</feature>